<sequence length="635" mass="68870">MSHTPTPAAGSGHASANSQTALVIGAIGVVFGDIGTSPLYTLKEAFSPHYGLTPDHDTVLGILSLVFWALMLVVTLKYVTVIMRADNDGEGGIMALTALAQRTLPGGSRSMYVVGILGIFGASLFFGDGVITPAISVLSAVEGLQVAAPKLEAFVVPITLVVLGMLFLAQRFGTERVGKAFGPITLVWFFALGAIGVYNMARAPEVLHALNPWWGVLFFVEHNWHAVFVLGAVVLAVTGGEALYADMGHFGAKAIRRSWQFVVLPMLTLTYLGQGALVLRDPSAVSNPFYEAVPEWALYPMIVLATAATVIASQALITGAYSVASQAMQLGYIPRMHIRHTSHSTIGQIYVPAVNWCLLLAVAVAVVGFGDSTSLATAYGVSVTGTMLITTVLMVIYARANPRVPAPLLWLFALVFLAVDCAFFYANIIKFLDGAWFPLLLGLILFTLMRTWRRGRKLLHDEIRKDGIKLDTFLPGLMLAPPVRVPGTAVFLTADPMVVPHALMHNLKHNKVLHERNVFLTVETLQGPYAAAGKRLKIEAIGDEFYRVHVRFGFMETPDVPLALMRSCDQGGIYFDPMDTTYFASRETIVASANRGMPIWRDKLFALMHRNAAPATGFFRIPGNRLVELGAQVEI</sequence>
<comment type="function">
    <text evidence="1">Transport of potassium into the cell. Likely operates as a K(+):H(+) symporter.</text>
</comment>
<comment type="catalytic activity">
    <reaction evidence="1">
        <text>K(+)(in) + H(+)(in) = K(+)(out) + H(+)(out)</text>
        <dbReference type="Rhea" id="RHEA:28490"/>
        <dbReference type="ChEBI" id="CHEBI:15378"/>
        <dbReference type="ChEBI" id="CHEBI:29103"/>
    </reaction>
    <physiologicalReaction direction="right-to-left" evidence="1">
        <dbReference type="Rhea" id="RHEA:28492"/>
    </physiologicalReaction>
</comment>
<comment type="subcellular location">
    <subcellularLocation>
        <location evidence="1">Cell inner membrane</location>
        <topology evidence="1">Multi-pass membrane protein</topology>
    </subcellularLocation>
</comment>
<comment type="similarity">
    <text evidence="1">Belongs to the HAK/KUP transporter (TC 2.A.72) family.</text>
</comment>
<accession>Q5H2A5</accession>
<gene>
    <name evidence="1" type="primary">kup</name>
    <name type="ordered locus">XOO1662</name>
</gene>
<dbReference type="EMBL" id="AE013598">
    <property type="protein sequence ID" value="AAW74916.1"/>
    <property type="molecule type" value="Genomic_DNA"/>
</dbReference>
<dbReference type="STRING" id="291331.XOO1662"/>
<dbReference type="KEGG" id="xoo:XOO1662"/>
<dbReference type="HOGENOM" id="CLU_008142_4_2_6"/>
<dbReference type="Proteomes" id="UP000006735">
    <property type="component" value="Chromosome"/>
</dbReference>
<dbReference type="GO" id="GO:0005886">
    <property type="term" value="C:plasma membrane"/>
    <property type="evidence" value="ECO:0007669"/>
    <property type="project" value="UniProtKB-SubCell"/>
</dbReference>
<dbReference type="GO" id="GO:0015079">
    <property type="term" value="F:potassium ion transmembrane transporter activity"/>
    <property type="evidence" value="ECO:0007669"/>
    <property type="project" value="UniProtKB-UniRule"/>
</dbReference>
<dbReference type="GO" id="GO:0015293">
    <property type="term" value="F:symporter activity"/>
    <property type="evidence" value="ECO:0007669"/>
    <property type="project" value="UniProtKB-UniRule"/>
</dbReference>
<dbReference type="HAMAP" id="MF_01522">
    <property type="entry name" value="Kup"/>
    <property type="match status" value="1"/>
</dbReference>
<dbReference type="InterPro" id="IPR003855">
    <property type="entry name" value="K+_transporter"/>
</dbReference>
<dbReference type="InterPro" id="IPR053952">
    <property type="entry name" value="K_trans_C"/>
</dbReference>
<dbReference type="InterPro" id="IPR053951">
    <property type="entry name" value="K_trans_N"/>
</dbReference>
<dbReference type="InterPro" id="IPR023051">
    <property type="entry name" value="Kup"/>
</dbReference>
<dbReference type="PANTHER" id="PTHR30540:SF79">
    <property type="entry name" value="LOW AFFINITY POTASSIUM TRANSPORT SYSTEM PROTEIN KUP"/>
    <property type="match status" value="1"/>
</dbReference>
<dbReference type="PANTHER" id="PTHR30540">
    <property type="entry name" value="OSMOTIC STRESS POTASSIUM TRANSPORTER"/>
    <property type="match status" value="1"/>
</dbReference>
<dbReference type="Pfam" id="PF02705">
    <property type="entry name" value="K_trans"/>
    <property type="match status" value="1"/>
</dbReference>
<dbReference type="Pfam" id="PF22776">
    <property type="entry name" value="K_trans_C"/>
    <property type="match status" value="1"/>
</dbReference>
<name>KUP_XANOR</name>
<proteinExistence type="inferred from homology"/>
<protein>
    <recommendedName>
        <fullName evidence="1">Probable potassium transport system protein Kup</fullName>
    </recommendedName>
</protein>
<organism>
    <name type="scientific">Xanthomonas oryzae pv. oryzae (strain KACC10331 / KXO85)</name>
    <dbReference type="NCBI Taxonomy" id="291331"/>
    <lineage>
        <taxon>Bacteria</taxon>
        <taxon>Pseudomonadati</taxon>
        <taxon>Pseudomonadota</taxon>
        <taxon>Gammaproteobacteria</taxon>
        <taxon>Lysobacterales</taxon>
        <taxon>Lysobacteraceae</taxon>
        <taxon>Xanthomonas</taxon>
    </lineage>
</organism>
<evidence type="ECO:0000255" key="1">
    <source>
        <dbReference type="HAMAP-Rule" id="MF_01522"/>
    </source>
</evidence>
<reference key="1">
    <citation type="journal article" date="2005" name="Nucleic Acids Res.">
        <title>The genome sequence of Xanthomonas oryzae pathovar oryzae KACC10331, the bacterial blight pathogen of rice.</title>
        <authorList>
            <person name="Lee B.-M."/>
            <person name="Park Y.-J."/>
            <person name="Park D.-S."/>
            <person name="Kang H.-W."/>
            <person name="Kim J.-G."/>
            <person name="Song E.-S."/>
            <person name="Park I.-C."/>
            <person name="Yoon U.-H."/>
            <person name="Hahn J.-H."/>
            <person name="Koo B.-S."/>
            <person name="Lee G.-B."/>
            <person name="Kim H."/>
            <person name="Park H.-S."/>
            <person name="Yoon K.-O."/>
            <person name="Kim J.-H."/>
            <person name="Jung C.-H."/>
            <person name="Koh N.-H."/>
            <person name="Seo J.-S."/>
            <person name="Go S.-J."/>
        </authorList>
    </citation>
    <scope>NUCLEOTIDE SEQUENCE [LARGE SCALE GENOMIC DNA]</scope>
    <source>
        <strain>KACC10331 / KXO85</strain>
    </source>
</reference>
<feature type="chain" id="PRO_0000209070" description="Probable potassium transport system protein Kup">
    <location>
        <begin position="1"/>
        <end position="635"/>
    </location>
</feature>
<feature type="transmembrane region" description="Helical" evidence="1">
    <location>
        <begin position="22"/>
        <end position="42"/>
    </location>
</feature>
<feature type="transmembrane region" description="Helical" evidence="1">
    <location>
        <begin position="59"/>
        <end position="79"/>
    </location>
</feature>
<feature type="transmembrane region" description="Helical" evidence="1">
    <location>
        <begin position="111"/>
        <end position="131"/>
    </location>
</feature>
<feature type="transmembrane region" description="Helical" evidence="1">
    <location>
        <begin position="148"/>
        <end position="168"/>
    </location>
</feature>
<feature type="transmembrane region" description="Helical" evidence="1">
    <location>
        <begin position="180"/>
        <end position="200"/>
    </location>
</feature>
<feature type="transmembrane region" description="Helical" evidence="1">
    <location>
        <begin position="216"/>
        <end position="236"/>
    </location>
</feature>
<feature type="transmembrane region" description="Helical" evidence="1">
    <location>
        <begin position="259"/>
        <end position="279"/>
    </location>
</feature>
<feature type="transmembrane region" description="Helical" evidence="1">
    <location>
        <begin position="297"/>
        <end position="317"/>
    </location>
</feature>
<feature type="transmembrane region" description="Helical" evidence="1">
    <location>
        <begin position="349"/>
        <end position="369"/>
    </location>
</feature>
<feature type="transmembrane region" description="Helical" evidence="1">
    <location>
        <begin position="378"/>
        <end position="398"/>
    </location>
</feature>
<feature type="transmembrane region" description="Helical" evidence="1">
    <location>
        <begin position="404"/>
        <end position="424"/>
    </location>
</feature>
<feature type="transmembrane region" description="Helical" evidence="1">
    <location>
        <begin position="428"/>
        <end position="448"/>
    </location>
</feature>
<keyword id="KW-0997">Cell inner membrane</keyword>
<keyword id="KW-1003">Cell membrane</keyword>
<keyword id="KW-0406">Ion transport</keyword>
<keyword id="KW-0472">Membrane</keyword>
<keyword id="KW-0630">Potassium</keyword>
<keyword id="KW-0633">Potassium transport</keyword>
<keyword id="KW-1185">Reference proteome</keyword>
<keyword id="KW-0769">Symport</keyword>
<keyword id="KW-0812">Transmembrane</keyword>
<keyword id="KW-1133">Transmembrane helix</keyword>
<keyword id="KW-0813">Transport</keyword>